<organism>
    <name type="scientific">Arabidopsis thaliana</name>
    <name type="common">Mouse-ear cress</name>
    <dbReference type="NCBI Taxonomy" id="3702"/>
    <lineage>
        <taxon>Eukaryota</taxon>
        <taxon>Viridiplantae</taxon>
        <taxon>Streptophyta</taxon>
        <taxon>Embryophyta</taxon>
        <taxon>Tracheophyta</taxon>
        <taxon>Spermatophyta</taxon>
        <taxon>Magnoliopsida</taxon>
        <taxon>eudicotyledons</taxon>
        <taxon>Gunneridae</taxon>
        <taxon>Pentapetalae</taxon>
        <taxon>rosids</taxon>
        <taxon>malvids</taxon>
        <taxon>Brassicales</taxon>
        <taxon>Brassicaceae</taxon>
        <taxon>Camelineae</taxon>
        <taxon>Arabidopsis</taxon>
    </lineage>
</organism>
<sequence length="620" mass="70571">MPVLQKRINKDTFGEILERVSSRMSGWREKTLSFAGRLTLTKAVLSSMPVHSMSTILLPQSILNRLDQLSRTFLWGSTAEKKKQHLVKWSKVCSPKKEGGLGVRAAKSMNRALISKVGWRLLQEKNSLWTLVLQKKYHVGEIRDSRWLIPKGSWSSTWRSIAIGLRDVVSHGVGWIPGDGQQIRFWTDRWVSGKPLLELDNGERPTDCDTVVAKDLWIPGRGWDFAKIDPYTTNNTRLELRAVVLDLVTGARDRLSWKFSQDGQFSVRSAYEMLTVDEVPRPNMASFFNCLWKVRVPERVKTFLWLVGNQAVMTEEERHRRHLSASNVCQVCKGGVESMLHVLRDCPAQLGIWVRVVPQRRQQGFFSKSLFEWLYDNLGDRSGCEDIPWSTIFAVIIWWGWKWRCGNIFGENTKCRDRVKFVKEWAVEVYRAHSGNVLVGITQPRVERMIGWVSPCVGWVKVNTDGASRGNPGLASAGGVLRDCTGAWCGGFSLNIGRCSAPQAELWGVYYGLYFAWEKKVPRVELEVDSEVIVGFLKTGISDSHPLSFLVRLCHGFLQKDWLVRIVHVYREANRLADGLANYAFSLSLGFHSFDLVPDAMSSLLREDTLGSTRPRRVRL</sequence>
<dbReference type="EC" id="3.1.26.4"/>
<dbReference type="EMBL" id="AC007234">
    <property type="protein sequence ID" value="AAF23831.1"/>
    <property type="status" value="ALT_SEQ"/>
    <property type="molecule type" value="Genomic_DNA"/>
</dbReference>
<dbReference type="EMBL" id="CP002684">
    <property type="status" value="NOT_ANNOTATED_CDS"/>
    <property type="molecule type" value="Genomic_DNA"/>
</dbReference>
<dbReference type="PIR" id="A96682">
    <property type="entry name" value="A96682"/>
</dbReference>
<dbReference type="SMR" id="P0C2F6"/>
<dbReference type="STRING" id="3702.P0C2F6"/>
<dbReference type="PaxDb" id="3702-AT5G42905.1"/>
<dbReference type="Araport" id="AT1G65750"/>
<dbReference type="TAIR" id="AT1G65750"/>
<dbReference type="eggNOG" id="KOG1075">
    <property type="taxonomic scope" value="Eukaryota"/>
</dbReference>
<dbReference type="InParanoid" id="P0C2F6"/>
<dbReference type="PRO" id="PR:P0C2F6"/>
<dbReference type="Proteomes" id="UP000006548">
    <property type="component" value="Chromosome 1"/>
</dbReference>
<dbReference type="GO" id="GO:0046872">
    <property type="term" value="F:metal ion binding"/>
    <property type="evidence" value="ECO:0007669"/>
    <property type="project" value="UniProtKB-KW"/>
</dbReference>
<dbReference type="GO" id="GO:0003676">
    <property type="term" value="F:nucleic acid binding"/>
    <property type="evidence" value="ECO:0007669"/>
    <property type="project" value="InterPro"/>
</dbReference>
<dbReference type="GO" id="GO:0004523">
    <property type="term" value="F:RNA-DNA hybrid ribonuclease activity"/>
    <property type="evidence" value="ECO:0007669"/>
    <property type="project" value="UniProtKB-EC"/>
</dbReference>
<dbReference type="CDD" id="cd06222">
    <property type="entry name" value="RNase_H_like"/>
    <property type="match status" value="1"/>
</dbReference>
<dbReference type="Gene3D" id="3.30.420.10">
    <property type="entry name" value="Ribonuclease H-like superfamily/Ribonuclease H"/>
    <property type="match status" value="1"/>
</dbReference>
<dbReference type="InterPro" id="IPR044730">
    <property type="entry name" value="RNase_H-like_dom_plant"/>
</dbReference>
<dbReference type="InterPro" id="IPR012337">
    <property type="entry name" value="RNaseH-like_sf"/>
</dbReference>
<dbReference type="InterPro" id="IPR002156">
    <property type="entry name" value="RNaseH_domain"/>
</dbReference>
<dbReference type="InterPro" id="IPR036397">
    <property type="entry name" value="RNaseH_sf"/>
</dbReference>
<dbReference type="InterPro" id="IPR026960">
    <property type="entry name" value="RVT-Znf"/>
</dbReference>
<dbReference type="PANTHER" id="PTHR33116:SF78">
    <property type="entry name" value="OS12G0587133 PROTEIN"/>
    <property type="match status" value="1"/>
</dbReference>
<dbReference type="PANTHER" id="PTHR33116">
    <property type="entry name" value="REVERSE TRANSCRIPTASE ZINC-BINDING DOMAIN-CONTAINING PROTEIN-RELATED-RELATED"/>
    <property type="match status" value="1"/>
</dbReference>
<dbReference type="Pfam" id="PF13456">
    <property type="entry name" value="RVT_3"/>
    <property type="match status" value="1"/>
</dbReference>
<dbReference type="Pfam" id="PF13966">
    <property type="entry name" value="zf-RVT"/>
    <property type="match status" value="1"/>
</dbReference>
<dbReference type="SUPFAM" id="SSF53098">
    <property type="entry name" value="Ribonuclease H-like"/>
    <property type="match status" value="1"/>
</dbReference>
<dbReference type="PROSITE" id="PS50879">
    <property type="entry name" value="RNASE_H_1"/>
    <property type="match status" value="1"/>
</dbReference>
<proteinExistence type="inferred from homology"/>
<name>RNHX1_ARATH</name>
<feature type="chain" id="PRO_0000274927" description="Putative ribonuclease H protein At1g65750">
    <location>
        <begin position="1"/>
        <end position="620"/>
    </location>
</feature>
<feature type="domain" description="RNase H type-1" evidence="2">
    <location>
        <begin position="456"/>
        <end position="586"/>
    </location>
</feature>
<feature type="binding site" evidence="2">
    <location>
        <position position="465"/>
    </location>
    <ligand>
        <name>Mg(2+)</name>
        <dbReference type="ChEBI" id="CHEBI:18420"/>
    </ligand>
</feature>
<feature type="binding site" evidence="2">
    <location>
        <position position="505"/>
    </location>
    <ligand>
        <name>Mg(2+)</name>
        <dbReference type="ChEBI" id="CHEBI:18420"/>
    </ligand>
</feature>
<feature type="binding site" evidence="2">
    <location>
        <position position="529"/>
    </location>
    <ligand>
        <name>Mg(2+)</name>
        <dbReference type="ChEBI" id="CHEBI:18420"/>
    </ligand>
</feature>
<feature type="binding site" evidence="2">
    <location>
        <position position="578"/>
    </location>
    <ligand>
        <name>Mg(2+)</name>
        <dbReference type="ChEBI" id="CHEBI:18420"/>
    </ligand>
</feature>
<keyword id="KW-0255">Endonuclease</keyword>
<keyword id="KW-0378">Hydrolase</keyword>
<keyword id="KW-0460">Magnesium</keyword>
<keyword id="KW-0479">Metal-binding</keyword>
<keyword id="KW-0540">Nuclease</keyword>
<keyword id="KW-1185">Reference proteome</keyword>
<accession>P0C2F6</accession>
<accession>Q9SHY0</accession>
<evidence type="ECO:0000250" key="1"/>
<evidence type="ECO:0000255" key="2">
    <source>
        <dbReference type="PROSITE-ProRule" id="PRU00408"/>
    </source>
</evidence>
<evidence type="ECO:0000305" key="3"/>
<reference key="1">
    <citation type="journal article" date="2000" name="Nature">
        <title>Sequence and analysis of chromosome 1 of the plant Arabidopsis thaliana.</title>
        <authorList>
            <person name="Theologis A."/>
            <person name="Ecker J.R."/>
            <person name="Palm C.J."/>
            <person name="Federspiel N.A."/>
            <person name="Kaul S."/>
            <person name="White O."/>
            <person name="Alonso J."/>
            <person name="Altafi H."/>
            <person name="Araujo R."/>
            <person name="Bowman C.L."/>
            <person name="Brooks S.Y."/>
            <person name="Buehler E."/>
            <person name="Chan A."/>
            <person name="Chao Q."/>
            <person name="Chen H."/>
            <person name="Cheuk R.F."/>
            <person name="Chin C.W."/>
            <person name="Chung M.K."/>
            <person name="Conn L."/>
            <person name="Conway A.B."/>
            <person name="Conway A.R."/>
            <person name="Creasy T.H."/>
            <person name="Dewar K."/>
            <person name="Dunn P."/>
            <person name="Etgu P."/>
            <person name="Feldblyum T.V."/>
            <person name="Feng J.-D."/>
            <person name="Fong B."/>
            <person name="Fujii C.Y."/>
            <person name="Gill J.E."/>
            <person name="Goldsmith A.D."/>
            <person name="Haas B."/>
            <person name="Hansen N.F."/>
            <person name="Hughes B."/>
            <person name="Huizar L."/>
            <person name="Hunter J.L."/>
            <person name="Jenkins J."/>
            <person name="Johnson-Hopson C."/>
            <person name="Khan S."/>
            <person name="Khaykin E."/>
            <person name="Kim C.J."/>
            <person name="Koo H.L."/>
            <person name="Kremenetskaia I."/>
            <person name="Kurtz D.B."/>
            <person name="Kwan A."/>
            <person name="Lam B."/>
            <person name="Langin-Hooper S."/>
            <person name="Lee A."/>
            <person name="Lee J.M."/>
            <person name="Lenz C.A."/>
            <person name="Li J.H."/>
            <person name="Li Y.-P."/>
            <person name="Lin X."/>
            <person name="Liu S.X."/>
            <person name="Liu Z.A."/>
            <person name="Luros J.S."/>
            <person name="Maiti R."/>
            <person name="Marziali A."/>
            <person name="Militscher J."/>
            <person name="Miranda M."/>
            <person name="Nguyen M."/>
            <person name="Nierman W.C."/>
            <person name="Osborne B.I."/>
            <person name="Pai G."/>
            <person name="Peterson J."/>
            <person name="Pham P.K."/>
            <person name="Rizzo M."/>
            <person name="Rooney T."/>
            <person name="Rowley D."/>
            <person name="Sakano H."/>
            <person name="Salzberg S.L."/>
            <person name="Schwartz J.R."/>
            <person name="Shinn P."/>
            <person name="Southwick A.M."/>
            <person name="Sun H."/>
            <person name="Tallon L.J."/>
            <person name="Tambunga G."/>
            <person name="Toriumi M.J."/>
            <person name="Town C.D."/>
            <person name="Utterback T."/>
            <person name="Van Aken S."/>
            <person name="Vaysberg M."/>
            <person name="Vysotskaia V.S."/>
            <person name="Walker M."/>
            <person name="Wu D."/>
            <person name="Yu G."/>
            <person name="Fraser C.M."/>
            <person name="Venter J.C."/>
            <person name="Davis R.W."/>
        </authorList>
    </citation>
    <scope>NUCLEOTIDE SEQUENCE [LARGE SCALE GENOMIC DNA]</scope>
    <source>
        <strain>cv. Columbia</strain>
    </source>
</reference>
<reference key="2">
    <citation type="journal article" date="2017" name="Plant J.">
        <title>Araport11: a complete reannotation of the Arabidopsis thaliana reference genome.</title>
        <authorList>
            <person name="Cheng C.Y."/>
            <person name="Krishnakumar V."/>
            <person name="Chan A.P."/>
            <person name="Thibaud-Nissen F."/>
            <person name="Schobel S."/>
            <person name="Town C.D."/>
        </authorList>
    </citation>
    <scope>GENOME REANNOTATION</scope>
    <source>
        <strain>cv. Columbia</strain>
    </source>
</reference>
<gene>
    <name type="ordered locus">At1g65750</name>
    <name type="ORF">F1E22.12</name>
</gene>
<comment type="catalytic activity">
    <reaction evidence="2">
        <text>Endonucleolytic cleavage to 5'-phosphomonoester.</text>
        <dbReference type="EC" id="3.1.26.4"/>
    </reaction>
</comment>
<comment type="cofactor">
    <cofactor evidence="1">
        <name>Mg(2+)</name>
        <dbReference type="ChEBI" id="CHEBI:18420"/>
    </cofactor>
    <text evidence="1">Binds 1 Mg(2+) ion per subunit.</text>
</comment>
<comment type="sequence caution" evidence="3">
    <conflict type="erroneous gene model prediction">
        <sequence resource="EMBL-CDS" id="AAF23831"/>
    </conflict>
    <text>The predicted gene At1g65760 has been split into 2 genes: At1g65750 and At1g65760.</text>
</comment>
<protein>
    <recommendedName>
        <fullName>Putative ribonuclease H protein At1g65750</fullName>
        <ecNumber>3.1.26.4</ecNumber>
    </recommendedName>
</protein>